<dbReference type="EC" id="2.1.1.49"/>
<dbReference type="EC" id="2.1.1.96"/>
<dbReference type="EMBL" id="AF077828">
    <property type="protein sequence ID" value="AAC97492.1"/>
    <property type="molecule type" value="Genomic_DNA"/>
</dbReference>
<dbReference type="EMBL" id="AF077827">
    <property type="protein sequence ID" value="AAC97492.1"/>
    <property type="status" value="JOINED"/>
    <property type="molecule type" value="Genomic_DNA"/>
</dbReference>
<dbReference type="EMBL" id="AF077826">
    <property type="protein sequence ID" value="AAC97491.1"/>
    <property type="molecule type" value="mRNA"/>
</dbReference>
<dbReference type="RefSeq" id="NP_001075512.1">
    <property type="nucleotide sequence ID" value="NM_001082043.1"/>
</dbReference>
<dbReference type="SMR" id="O97972"/>
<dbReference type="STRING" id="9986.ENSOCUP00000021686"/>
<dbReference type="BindingDB" id="O97972"/>
<dbReference type="ChEMBL" id="CHEMBL3227915"/>
<dbReference type="PaxDb" id="9986-ENSOCUP00000021686"/>
<dbReference type="Ensembl" id="ENSOCUT00000024664.3">
    <property type="protein sequence ID" value="ENSOCUP00000021686.3"/>
    <property type="gene ID" value="ENSOCUG00000024221.3"/>
</dbReference>
<dbReference type="GeneID" id="100008695"/>
<dbReference type="KEGG" id="ocu:100008695"/>
<dbReference type="CTD" id="11185"/>
<dbReference type="eggNOG" id="KOG4564">
    <property type="taxonomic scope" value="Eukaryota"/>
</dbReference>
<dbReference type="GeneTree" id="ENSGT00390000011708"/>
<dbReference type="InParanoid" id="O97972"/>
<dbReference type="OrthoDB" id="10050085at2759"/>
<dbReference type="TreeFam" id="TF313114"/>
<dbReference type="SABIO-RK" id="O97972"/>
<dbReference type="Proteomes" id="UP000001811">
    <property type="component" value="Chromosome 10"/>
</dbReference>
<dbReference type="Bgee" id="ENSOCUG00000024221">
    <property type="expression patterns" value="Expressed in lung and 18 other cell types or tissues"/>
</dbReference>
<dbReference type="ExpressionAtlas" id="O97972">
    <property type="expression patterns" value="baseline"/>
</dbReference>
<dbReference type="GO" id="GO:0005829">
    <property type="term" value="C:cytosol"/>
    <property type="evidence" value="ECO:0000250"/>
    <property type="project" value="UniProtKB"/>
</dbReference>
<dbReference type="GO" id="GO:0030748">
    <property type="term" value="F:amine N-methyltransferase activity"/>
    <property type="evidence" value="ECO:0000250"/>
    <property type="project" value="UniProtKB"/>
</dbReference>
<dbReference type="GO" id="GO:0008170">
    <property type="term" value="F:N-methyltransferase activity"/>
    <property type="evidence" value="ECO:0007669"/>
    <property type="project" value="TreeGrafter"/>
</dbReference>
<dbReference type="GO" id="GO:0004790">
    <property type="term" value="F:thioether S-methyltransferase activity"/>
    <property type="evidence" value="ECO:0007669"/>
    <property type="project" value="UniProtKB-EC"/>
</dbReference>
<dbReference type="GO" id="GO:0009308">
    <property type="term" value="P:amine metabolic process"/>
    <property type="evidence" value="ECO:0000250"/>
    <property type="project" value="UniProtKB"/>
</dbReference>
<dbReference type="GO" id="GO:0032259">
    <property type="term" value="P:methylation"/>
    <property type="evidence" value="ECO:0000250"/>
    <property type="project" value="UniProtKB"/>
</dbReference>
<dbReference type="GO" id="GO:0009636">
    <property type="term" value="P:response to toxic substance"/>
    <property type="evidence" value="ECO:0007669"/>
    <property type="project" value="UniProtKB-KW"/>
</dbReference>
<dbReference type="CDD" id="cd02440">
    <property type="entry name" value="AdoMet_MTases"/>
    <property type="match status" value="1"/>
</dbReference>
<dbReference type="FunFam" id="3.40.50.150:FF:000065">
    <property type="entry name" value="Phenylethanolamine N-methyltransferase"/>
    <property type="match status" value="1"/>
</dbReference>
<dbReference type="Gene3D" id="3.40.50.150">
    <property type="entry name" value="Vaccinia Virus protein VP39"/>
    <property type="match status" value="1"/>
</dbReference>
<dbReference type="InterPro" id="IPR025820">
    <property type="entry name" value="NNMT/PNMT/TEMT_CS"/>
</dbReference>
<dbReference type="InterPro" id="IPR000940">
    <property type="entry name" value="NNMT_TEMT_trans"/>
</dbReference>
<dbReference type="InterPro" id="IPR053384">
    <property type="entry name" value="SAM-dep_methyltransferase"/>
</dbReference>
<dbReference type="InterPro" id="IPR029063">
    <property type="entry name" value="SAM-dependent_MTases_sf"/>
</dbReference>
<dbReference type="NCBIfam" id="NF041360">
    <property type="entry name" value="GntF_guanitoxin"/>
    <property type="match status" value="1"/>
</dbReference>
<dbReference type="PANTHER" id="PTHR10867:SF33">
    <property type="entry name" value="INDOLETHYLAMINE N-METHYLTRANSFERASE"/>
    <property type="match status" value="1"/>
</dbReference>
<dbReference type="PANTHER" id="PTHR10867">
    <property type="entry name" value="NNMT/PNMT/TEMT FAMILY MEMBER"/>
    <property type="match status" value="1"/>
</dbReference>
<dbReference type="Pfam" id="PF01234">
    <property type="entry name" value="NNMT_PNMT_TEMT"/>
    <property type="match status" value="1"/>
</dbReference>
<dbReference type="PIRSF" id="PIRSF000384">
    <property type="entry name" value="PNMTase"/>
    <property type="match status" value="1"/>
</dbReference>
<dbReference type="SUPFAM" id="SSF53335">
    <property type="entry name" value="S-adenosyl-L-methionine-dependent methyltransferases"/>
    <property type="match status" value="1"/>
</dbReference>
<dbReference type="PROSITE" id="PS01100">
    <property type="entry name" value="NNMT_PNMT_TEMT"/>
    <property type="match status" value="1"/>
</dbReference>
<dbReference type="PROSITE" id="PS51681">
    <property type="entry name" value="SAM_MT_NNMT_PNMT_TEMT"/>
    <property type="match status" value="1"/>
</dbReference>
<organism>
    <name type="scientific">Oryctolagus cuniculus</name>
    <name type="common">Rabbit</name>
    <dbReference type="NCBI Taxonomy" id="9986"/>
    <lineage>
        <taxon>Eukaryota</taxon>
        <taxon>Metazoa</taxon>
        <taxon>Chordata</taxon>
        <taxon>Craniata</taxon>
        <taxon>Vertebrata</taxon>
        <taxon>Euteleostomi</taxon>
        <taxon>Mammalia</taxon>
        <taxon>Eutheria</taxon>
        <taxon>Euarchontoglires</taxon>
        <taxon>Glires</taxon>
        <taxon>Lagomorpha</taxon>
        <taxon>Leporidae</taxon>
        <taxon>Oryctolagus</taxon>
    </lineage>
</organism>
<protein>
    <recommendedName>
        <fullName>Indolethylamine N-methyltransferase</fullName>
        <shortName>Indolamine N-methyltransferase</shortName>
        <ecNumber>2.1.1.49</ecNumber>
        <ecNumber>2.1.1.96</ecNumber>
    </recommendedName>
    <alternativeName>
        <fullName>Aromatic alkylamine N-methyltransferase</fullName>
        <shortName>Amine N-methyltransferase</shortName>
        <shortName>Arylamine N-methyltransferase</shortName>
    </alternativeName>
    <alternativeName>
        <fullName>Thioether S-methyltransferase</fullName>
    </alternativeName>
</protein>
<accession>O97972</accession>
<evidence type="ECO:0000250" key="1"/>
<evidence type="ECO:0000250" key="2">
    <source>
        <dbReference type="UniProtKB" id="P40936"/>
    </source>
</evidence>
<evidence type="ECO:0000305" key="3"/>
<feature type="chain" id="PRO_0000159715" description="Indolethylamine N-methyltransferase">
    <location>
        <begin position="1"/>
        <end position="263"/>
    </location>
</feature>
<feature type="binding site" evidence="1">
    <location>
        <position position="20"/>
    </location>
    <ligand>
        <name>S-adenosyl-L-methionine</name>
        <dbReference type="ChEBI" id="CHEBI:59789"/>
    </ligand>
</feature>
<feature type="binding site" evidence="1">
    <location>
        <position position="25"/>
    </location>
    <ligand>
        <name>S-adenosyl-L-methionine</name>
        <dbReference type="ChEBI" id="CHEBI:59789"/>
    </ligand>
</feature>
<feature type="binding site" evidence="1">
    <location>
        <begin position="63"/>
        <end position="64"/>
    </location>
    <ligand>
        <name>S-adenosyl-L-methionine</name>
        <dbReference type="ChEBI" id="CHEBI:59789"/>
    </ligand>
</feature>
<feature type="binding site" evidence="1">
    <location>
        <position position="69"/>
    </location>
    <ligand>
        <name>S-adenosyl-L-methionine</name>
        <dbReference type="ChEBI" id="CHEBI:59789"/>
    </ligand>
</feature>
<feature type="binding site" evidence="1">
    <location>
        <position position="85"/>
    </location>
    <ligand>
        <name>S-adenosyl-L-methionine</name>
        <dbReference type="ChEBI" id="CHEBI:59789"/>
    </ligand>
</feature>
<feature type="binding site" evidence="1">
    <location>
        <position position="90"/>
    </location>
    <ligand>
        <name>S-adenosyl-L-methionine</name>
        <dbReference type="ChEBI" id="CHEBI:59789"/>
    </ligand>
</feature>
<feature type="binding site" evidence="1">
    <location>
        <begin position="142"/>
        <end position="143"/>
    </location>
    <ligand>
        <name>S-adenosyl-L-methionine</name>
        <dbReference type="ChEBI" id="CHEBI:59789"/>
    </ligand>
</feature>
<feature type="binding site" evidence="1">
    <location>
        <position position="163"/>
    </location>
    <ligand>
        <name>S-adenosyl-L-methionine</name>
        <dbReference type="ChEBI" id="CHEBI:59789"/>
    </ligand>
</feature>
<feature type="modified residue" description="N6-succinyllysine" evidence="2">
    <location>
        <position position="13"/>
    </location>
</feature>
<feature type="modified residue" description="N6-succinyllysine" evidence="2">
    <location>
        <position position="96"/>
    </location>
</feature>
<proteinExistence type="evidence at protein level"/>
<reference key="1">
    <citation type="journal article" date="1998" name="J. Biol. Chem.">
        <title>Rabbit lung indolethylamine N-methyltransferase. cDNA and gene cloning and characterization.</title>
        <authorList>
            <person name="Thompson M.A."/>
            <person name="Weinshilboum R.M."/>
        </authorList>
    </citation>
    <scope>NUCLEOTIDE SEQUENCE [GENOMIC DNA / MRNA]</scope>
    <scope>PROTEIN SEQUENCE OF 1-129</scope>
    <scope>CHARACTERIZATION</scope>
    <source>
        <tissue>Lung</tissue>
    </source>
</reference>
<reference key="2">
    <citation type="journal article" date="1982" name="Biochemistry">
        <title>Purification and molecular properties of rabbit lung indolamine N-methyltransferase.</title>
        <authorList>
            <person name="Irace G."/>
            <person name="Colonna G."/>
            <person name="Camardella M."/>
            <person name="Della Pietra G."/>
            <person name="Porta R."/>
        </authorList>
    </citation>
    <scope>CHARACTERIZATION</scope>
    <source>
        <tissue>Lung</tissue>
    </source>
</reference>
<gene>
    <name type="primary">INMT</name>
</gene>
<name>INMT_RABIT</name>
<keyword id="KW-0963">Cytoplasm</keyword>
<keyword id="KW-0216">Detoxification</keyword>
<keyword id="KW-0903">Direct protein sequencing</keyword>
<keyword id="KW-0489">Methyltransferase</keyword>
<keyword id="KW-1185">Reference proteome</keyword>
<keyword id="KW-0949">S-adenosyl-L-methionine</keyword>
<keyword id="KW-0808">Transferase</keyword>
<comment type="function">
    <text evidence="1">Catalyzes the N-methylation of tryptamine and structurally related compounds (By similarity). Functions as a thioether S-methyltransferase and is active with a variety of thioethers and the corresponding selenium and tellurium compounds, including 3-methylthiopropionaldehyde, dimethyl selenide, dimethyl telluride, 2-methylthioethylamine, 2-methylthioethanol, methyl-n-propyl sulfide and diethyl sulfide. Plays an important role in the detoxification of selenium compounds (By similarity).</text>
</comment>
<comment type="catalytic activity">
    <reaction>
        <text>a tertiary amine + S-adenosyl-L-methionine = a methylated tertiary amine + S-adenosyl-L-homocysteine + H(+)</text>
        <dbReference type="Rhea" id="RHEA:53928"/>
        <dbReference type="ChEBI" id="CHEBI:15378"/>
        <dbReference type="ChEBI" id="CHEBI:57856"/>
        <dbReference type="ChEBI" id="CHEBI:59789"/>
        <dbReference type="ChEBI" id="CHEBI:137982"/>
        <dbReference type="ChEBI" id="CHEBI:137983"/>
        <dbReference type="EC" id="2.1.1.49"/>
    </reaction>
</comment>
<comment type="catalytic activity">
    <reaction>
        <text>a secondary amine + S-adenosyl-L-methionine = a methylated secondary amine + S-adenosyl-L-homocysteine + H(+)</text>
        <dbReference type="Rhea" id="RHEA:53924"/>
        <dbReference type="ChEBI" id="CHEBI:15378"/>
        <dbReference type="ChEBI" id="CHEBI:57856"/>
        <dbReference type="ChEBI" id="CHEBI:59789"/>
        <dbReference type="ChEBI" id="CHEBI:137419"/>
        <dbReference type="ChEBI" id="CHEBI:137984"/>
        <dbReference type="EC" id="2.1.1.49"/>
    </reaction>
</comment>
<comment type="catalytic activity">
    <reaction>
        <text>a primary amine + S-adenosyl-L-methionine = a methylated primary amine + S-adenosyl-L-homocysteine + H(+)</text>
        <dbReference type="Rhea" id="RHEA:23136"/>
        <dbReference type="ChEBI" id="CHEBI:15378"/>
        <dbReference type="ChEBI" id="CHEBI:57856"/>
        <dbReference type="ChEBI" id="CHEBI:59789"/>
        <dbReference type="ChEBI" id="CHEBI:65296"/>
        <dbReference type="ChEBI" id="CHEBI:131823"/>
        <dbReference type="EC" id="2.1.1.49"/>
    </reaction>
</comment>
<comment type="catalytic activity">
    <reaction>
        <text>dimethyl sulfide + S-adenosyl-L-methionine = trimethylsulfonium + S-adenosyl-L-homocysteine</text>
        <dbReference type="Rhea" id="RHEA:19613"/>
        <dbReference type="ChEBI" id="CHEBI:17434"/>
        <dbReference type="ChEBI" id="CHEBI:17437"/>
        <dbReference type="ChEBI" id="CHEBI:57856"/>
        <dbReference type="ChEBI" id="CHEBI:59789"/>
        <dbReference type="EC" id="2.1.1.96"/>
    </reaction>
</comment>
<comment type="subunit">
    <text>Monomer.</text>
</comment>
<comment type="subcellular location">
    <subcellularLocation>
        <location>Cytoplasm</location>
    </subcellularLocation>
</comment>
<comment type="tissue specificity">
    <text>Highly expressed in lung, also detected in liver and at very low levels in brain.</text>
</comment>
<comment type="similarity">
    <text evidence="3">Belongs to the class I-like SAM-binding methyltransferase superfamily. NNMT/PNMT/TEMT family.</text>
</comment>
<sequence length="263" mass="28955">MEGGFTGGDEYQKHFLPRDYLNTYYSFQSGPSPEAEMLKFNLECLHKTFGPGGLQGDTLIDIGSGPTIYQVLAACESFKDITLSDFTDRNREELAKWLKKEPGAYDWTPALKFACELEGNSGRWQEKAEKLRATVKRVLKCDANLSNPLTPVVLPPADCVLTLLAMECACCSLDAYRAALRNLASLLKPGGHLVTTVTLQLSSYMVGEREFSCVALEKEEVEQAVLDAGFDIEQLLYSPQSYSASTAPNRGVCFLVARKKPGS</sequence>